<comment type="subcellular location">
    <subcellularLocation>
        <location evidence="3">Cell membrane</location>
        <topology evidence="3">Multi-pass membrane protein</topology>
    </subcellularLocation>
</comment>
<comment type="sequence caution" evidence="3">
    <conflict type="erroneous initiation">
        <sequence resource="EMBL-CDS" id="CAB07933"/>
    </conflict>
    <text>Extended N-terminus.</text>
</comment>
<comment type="sequence caution" evidence="3">
    <conflict type="frameshift">
        <sequence resource="EMBL-CDS" id="CAB07933"/>
    </conflict>
</comment>
<reference key="1">
    <citation type="journal article" date="1997" name="Microbiology">
        <title>Analysis of the Bacillus subtilis genome: cloning and nucleotide sequence of a 62 kb region between 275 degrees (rrnB) and 284 degrees (pai).</title>
        <authorList>
            <person name="Oudega B."/>
            <person name="Koningstein G."/>
            <person name="Rodrigues L."/>
            <person name="de Sales Ramon M."/>
            <person name="Hilbert H."/>
            <person name="Duesterhoeft A."/>
            <person name="Pohl T.M."/>
            <person name="Weitzenegger T."/>
        </authorList>
    </citation>
    <scope>NUCLEOTIDE SEQUENCE [GENOMIC DNA]</scope>
    <source>
        <strain>168</strain>
    </source>
</reference>
<reference key="2">
    <citation type="journal article" date="1997" name="Nature">
        <title>The complete genome sequence of the Gram-positive bacterium Bacillus subtilis.</title>
        <authorList>
            <person name="Kunst F."/>
            <person name="Ogasawara N."/>
            <person name="Moszer I."/>
            <person name="Albertini A.M."/>
            <person name="Alloni G."/>
            <person name="Azevedo V."/>
            <person name="Bertero M.G."/>
            <person name="Bessieres P."/>
            <person name="Bolotin A."/>
            <person name="Borchert S."/>
            <person name="Borriss R."/>
            <person name="Boursier L."/>
            <person name="Brans A."/>
            <person name="Braun M."/>
            <person name="Brignell S.C."/>
            <person name="Bron S."/>
            <person name="Brouillet S."/>
            <person name="Bruschi C.V."/>
            <person name="Caldwell B."/>
            <person name="Capuano V."/>
            <person name="Carter N.M."/>
            <person name="Choi S.-K."/>
            <person name="Codani J.-J."/>
            <person name="Connerton I.F."/>
            <person name="Cummings N.J."/>
            <person name="Daniel R.A."/>
            <person name="Denizot F."/>
            <person name="Devine K.M."/>
            <person name="Duesterhoeft A."/>
            <person name="Ehrlich S.D."/>
            <person name="Emmerson P.T."/>
            <person name="Entian K.-D."/>
            <person name="Errington J."/>
            <person name="Fabret C."/>
            <person name="Ferrari E."/>
            <person name="Foulger D."/>
            <person name="Fritz C."/>
            <person name="Fujita M."/>
            <person name="Fujita Y."/>
            <person name="Fuma S."/>
            <person name="Galizzi A."/>
            <person name="Galleron N."/>
            <person name="Ghim S.-Y."/>
            <person name="Glaser P."/>
            <person name="Goffeau A."/>
            <person name="Golightly E.J."/>
            <person name="Grandi G."/>
            <person name="Guiseppi G."/>
            <person name="Guy B.J."/>
            <person name="Haga K."/>
            <person name="Haiech J."/>
            <person name="Harwood C.R."/>
            <person name="Henaut A."/>
            <person name="Hilbert H."/>
            <person name="Holsappel S."/>
            <person name="Hosono S."/>
            <person name="Hullo M.-F."/>
            <person name="Itaya M."/>
            <person name="Jones L.-M."/>
            <person name="Joris B."/>
            <person name="Karamata D."/>
            <person name="Kasahara Y."/>
            <person name="Klaerr-Blanchard M."/>
            <person name="Klein C."/>
            <person name="Kobayashi Y."/>
            <person name="Koetter P."/>
            <person name="Koningstein G."/>
            <person name="Krogh S."/>
            <person name="Kumano M."/>
            <person name="Kurita K."/>
            <person name="Lapidus A."/>
            <person name="Lardinois S."/>
            <person name="Lauber J."/>
            <person name="Lazarevic V."/>
            <person name="Lee S.-M."/>
            <person name="Levine A."/>
            <person name="Liu H."/>
            <person name="Masuda S."/>
            <person name="Mauel C."/>
            <person name="Medigue C."/>
            <person name="Medina N."/>
            <person name="Mellado R.P."/>
            <person name="Mizuno M."/>
            <person name="Moestl D."/>
            <person name="Nakai S."/>
            <person name="Noback M."/>
            <person name="Noone D."/>
            <person name="O'Reilly M."/>
            <person name="Ogawa K."/>
            <person name="Ogiwara A."/>
            <person name="Oudega B."/>
            <person name="Park S.-H."/>
            <person name="Parro V."/>
            <person name="Pohl T.M."/>
            <person name="Portetelle D."/>
            <person name="Porwollik S."/>
            <person name="Prescott A.M."/>
            <person name="Presecan E."/>
            <person name="Pujic P."/>
            <person name="Purnelle B."/>
            <person name="Rapoport G."/>
            <person name="Rey M."/>
            <person name="Reynolds S."/>
            <person name="Rieger M."/>
            <person name="Rivolta C."/>
            <person name="Rocha E."/>
            <person name="Roche B."/>
            <person name="Rose M."/>
            <person name="Sadaie Y."/>
            <person name="Sato T."/>
            <person name="Scanlan E."/>
            <person name="Schleich S."/>
            <person name="Schroeter R."/>
            <person name="Scoffone F."/>
            <person name="Sekiguchi J."/>
            <person name="Sekowska A."/>
            <person name="Seror S.J."/>
            <person name="Serror P."/>
            <person name="Shin B.-S."/>
            <person name="Soldo B."/>
            <person name="Sorokin A."/>
            <person name="Tacconi E."/>
            <person name="Takagi T."/>
            <person name="Takahashi H."/>
            <person name="Takemaru K."/>
            <person name="Takeuchi M."/>
            <person name="Tamakoshi A."/>
            <person name="Tanaka T."/>
            <person name="Terpstra P."/>
            <person name="Tognoni A."/>
            <person name="Tosato V."/>
            <person name="Uchiyama S."/>
            <person name="Vandenbol M."/>
            <person name="Vannier F."/>
            <person name="Vassarotti A."/>
            <person name="Viari A."/>
            <person name="Wambutt R."/>
            <person name="Wedler E."/>
            <person name="Wedler H."/>
            <person name="Weitzenegger T."/>
            <person name="Winters P."/>
            <person name="Wipat A."/>
            <person name="Yamamoto H."/>
            <person name="Yamane K."/>
            <person name="Yasumoto K."/>
            <person name="Yata K."/>
            <person name="Yoshida K."/>
            <person name="Yoshikawa H.-F."/>
            <person name="Zumstein E."/>
            <person name="Yoshikawa H."/>
            <person name="Danchin A."/>
        </authorList>
    </citation>
    <scope>NUCLEOTIDE SEQUENCE [LARGE SCALE GENOMIC DNA]</scope>
    <source>
        <strain>168</strain>
    </source>
</reference>
<gene>
    <name type="primary">yugO</name>
    <name type="ordered locus">BSU31322</name>
    <name type="ORF">BSU31320</name>
</gene>
<feature type="chain" id="PRO_0000390882" description="Putative potassium channel protein YugO">
    <location>
        <begin position="1"/>
        <end position="328"/>
    </location>
</feature>
<feature type="transmembrane region" description="Helical" evidence="1">
    <location>
        <begin position="19"/>
        <end position="39"/>
    </location>
</feature>
<feature type="transmembrane region" description="Helical" evidence="1">
    <location>
        <begin position="42"/>
        <end position="62"/>
    </location>
</feature>
<feature type="transmembrane region" description="Helical" evidence="1">
    <location>
        <begin position="73"/>
        <end position="93"/>
    </location>
</feature>
<feature type="domain" description="RCK N-terminal" evidence="2">
    <location>
        <begin position="114"/>
        <end position="238"/>
    </location>
</feature>
<dbReference type="EMBL" id="Z93936">
    <property type="protein sequence ID" value="CAB07933.1"/>
    <property type="status" value="ALT_SEQ"/>
    <property type="molecule type" value="Genomic_DNA"/>
</dbReference>
<dbReference type="EMBL" id="AL009126">
    <property type="protein sequence ID" value="CAB15121.3"/>
    <property type="molecule type" value="Genomic_DNA"/>
</dbReference>
<dbReference type="RefSeq" id="WP_003242502.1">
    <property type="nucleotide sequence ID" value="NZ_OZ025638.1"/>
</dbReference>
<dbReference type="SMR" id="Q795M8"/>
<dbReference type="FunCoup" id="Q795M8">
    <property type="interactions" value="1"/>
</dbReference>
<dbReference type="STRING" id="224308.BSU31322"/>
<dbReference type="TCDB" id="1.A.1.13.4">
    <property type="family name" value="the voltage-gated ion channel (vic) superfamily"/>
</dbReference>
<dbReference type="PaxDb" id="224308-BSU31322"/>
<dbReference type="EnsemblBacteria" id="CAB15121">
    <property type="protein sequence ID" value="CAB15121"/>
    <property type="gene ID" value="BSU_31322"/>
</dbReference>
<dbReference type="GeneID" id="938842"/>
<dbReference type="KEGG" id="bsu:BSU31322"/>
<dbReference type="PATRIC" id="fig|224308.179.peg.3396"/>
<dbReference type="eggNOG" id="COG1226">
    <property type="taxonomic scope" value="Bacteria"/>
</dbReference>
<dbReference type="InParanoid" id="Q795M8"/>
<dbReference type="OrthoDB" id="9785285at2"/>
<dbReference type="PhylomeDB" id="Q795M8"/>
<dbReference type="BioCyc" id="BSUB:BSU31322-MONOMER"/>
<dbReference type="Proteomes" id="UP000001570">
    <property type="component" value="Chromosome"/>
</dbReference>
<dbReference type="GO" id="GO:0005886">
    <property type="term" value="C:plasma membrane"/>
    <property type="evidence" value="ECO:0007669"/>
    <property type="project" value="UniProtKB-SubCell"/>
</dbReference>
<dbReference type="GO" id="GO:0005267">
    <property type="term" value="F:potassium channel activity"/>
    <property type="evidence" value="ECO:0007669"/>
    <property type="project" value="UniProtKB-KW"/>
</dbReference>
<dbReference type="Gene3D" id="1.10.287.70">
    <property type="match status" value="1"/>
</dbReference>
<dbReference type="Gene3D" id="3.40.50.720">
    <property type="entry name" value="NAD(P)-binding Rossmann-like Domain"/>
    <property type="match status" value="1"/>
</dbReference>
<dbReference type="InterPro" id="IPR013099">
    <property type="entry name" value="K_chnl_dom"/>
</dbReference>
<dbReference type="InterPro" id="IPR036291">
    <property type="entry name" value="NAD(P)-bd_dom_sf"/>
</dbReference>
<dbReference type="InterPro" id="IPR003148">
    <property type="entry name" value="RCK_N"/>
</dbReference>
<dbReference type="InterPro" id="IPR050721">
    <property type="entry name" value="Trk_Ktr_HKT_K-transport"/>
</dbReference>
<dbReference type="PANTHER" id="PTHR43833">
    <property type="entry name" value="POTASSIUM CHANNEL PROTEIN 2-RELATED-RELATED"/>
    <property type="match status" value="1"/>
</dbReference>
<dbReference type="PANTHER" id="PTHR43833:SF9">
    <property type="entry name" value="POTASSIUM CHANNEL PROTEIN YUGO-RELATED"/>
    <property type="match status" value="1"/>
</dbReference>
<dbReference type="Pfam" id="PF07885">
    <property type="entry name" value="Ion_trans_2"/>
    <property type="match status" value="1"/>
</dbReference>
<dbReference type="Pfam" id="PF02254">
    <property type="entry name" value="TrkA_N"/>
    <property type="match status" value="1"/>
</dbReference>
<dbReference type="PRINTS" id="PR00169">
    <property type="entry name" value="KCHANNEL"/>
</dbReference>
<dbReference type="SUPFAM" id="SSF51735">
    <property type="entry name" value="NAD(P)-binding Rossmann-fold domains"/>
    <property type="match status" value="1"/>
</dbReference>
<dbReference type="SUPFAM" id="SSF81324">
    <property type="entry name" value="Voltage-gated potassium channels"/>
    <property type="match status" value="1"/>
</dbReference>
<dbReference type="PROSITE" id="PS51201">
    <property type="entry name" value="RCK_N"/>
    <property type="match status" value="1"/>
</dbReference>
<evidence type="ECO:0000255" key="1"/>
<evidence type="ECO:0000255" key="2">
    <source>
        <dbReference type="PROSITE-ProRule" id="PRU00543"/>
    </source>
</evidence>
<evidence type="ECO:0000305" key="3"/>
<name>YUGO_BACSU</name>
<accession>Q795M8</accession>
<accession>O05247</accession>
<sequence length="328" mass="36579">MKSNRIFISWLRWPLFIRIGVIILCLILLFGQIIYILEPKQFTSVFEGIWWAVVTVSTVGYGDYVPHTPLGQAAGILLILSGASFVTAYFATLSAAAFSRQHRYIEGKVAYKGRDHIILIGWNEKTNRLLKDLQLAAPSKTVVLIDESLTEGPLIENVHFIRGHAADDGTLKRANITEAESVMITADQYKSETDADMLSVLTLLSVKGLNPLAYCIVEILTDRFVTNAERAGANQIIGTSEFISRAMLQHYQVKLRPSKQQNGIKLTLDQHVELLAVPDELKGAAYKTCVLYFLDHNTTIIGIQKKEGPMLSPPLTYKVLETDQFLAI</sequence>
<organism>
    <name type="scientific">Bacillus subtilis (strain 168)</name>
    <dbReference type="NCBI Taxonomy" id="224308"/>
    <lineage>
        <taxon>Bacteria</taxon>
        <taxon>Bacillati</taxon>
        <taxon>Bacillota</taxon>
        <taxon>Bacilli</taxon>
        <taxon>Bacillales</taxon>
        <taxon>Bacillaceae</taxon>
        <taxon>Bacillus</taxon>
    </lineage>
</organism>
<protein>
    <recommendedName>
        <fullName>Putative potassium channel protein YugO</fullName>
    </recommendedName>
</protein>
<proteinExistence type="predicted"/>
<keyword id="KW-1003">Cell membrane</keyword>
<keyword id="KW-0407">Ion channel</keyword>
<keyword id="KW-0406">Ion transport</keyword>
<keyword id="KW-0472">Membrane</keyword>
<keyword id="KW-0630">Potassium</keyword>
<keyword id="KW-0631">Potassium channel</keyword>
<keyword id="KW-0633">Potassium transport</keyword>
<keyword id="KW-1185">Reference proteome</keyword>
<keyword id="KW-0812">Transmembrane</keyword>
<keyword id="KW-1133">Transmembrane helix</keyword>
<keyword id="KW-0813">Transport</keyword>